<accession>Q01664</accession>
<accession>O60409</accession>
<dbReference type="EMBL" id="S73885">
    <property type="protein sequence ID" value="AAB32235.1"/>
    <property type="molecule type" value="mRNA"/>
</dbReference>
<dbReference type="EMBL" id="AC004653">
    <property type="protein sequence ID" value="AAC17116.1"/>
    <property type="molecule type" value="Genomic_DNA"/>
</dbReference>
<dbReference type="EMBL" id="BC010576">
    <property type="protein sequence ID" value="AAH10576.1"/>
    <property type="molecule type" value="mRNA"/>
</dbReference>
<dbReference type="EMBL" id="X57435">
    <property type="protein sequence ID" value="CAA40683.1"/>
    <property type="molecule type" value="mRNA"/>
</dbReference>
<dbReference type="CCDS" id="CCDS10510.1"/>
<dbReference type="PIR" id="I56893">
    <property type="entry name" value="I56893"/>
</dbReference>
<dbReference type="RefSeq" id="NP_003214.1">
    <property type="nucleotide sequence ID" value="NM_003223.3"/>
</dbReference>
<dbReference type="SMR" id="Q01664"/>
<dbReference type="BioGRID" id="112881">
    <property type="interactions" value="157"/>
</dbReference>
<dbReference type="DIP" id="DIP-53627N"/>
<dbReference type="FunCoup" id="Q01664">
    <property type="interactions" value="3760"/>
</dbReference>
<dbReference type="IntAct" id="Q01664">
    <property type="interactions" value="61"/>
</dbReference>
<dbReference type="MINT" id="Q01664"/>
<dbReference type="STRING" id="9606.ENSP00000204517"/>
<dbReference type="GlyGen" id="Q01664">
    <property type="glycosylation" value="2 sites, 1 O-linked glycan (2 sites)"/>
</dbReference>
<dbReference type="iPTMnet" id="Q01664"/>
<dbReference type="PhosphoSitePlus" id="Q01664"/>
<dbReference type="BioMuta" id="TFAP4"/>
<dbReference type="DMDM" id="1729833"/>
<dbReference type="jPOST" id="Q01664"/>
<dbReference type="MassIVE" id="Q01664"/>
<dbReference type="PaxDb" id="9606-ENSP00000204517"/>
<dbReference type="PeptideAtlas" id="Q01664"/>
<dbReference type="ProteomicsDB" id="57980"/>
<dbReference type="Pumba" id="Q01664"/>
<dbReference type="Antibodypedia" id="894">
    <property type="antibodies" value="319 antibodies from 26 providers"/>
</dbReference>
<dbReference type="DNASU" id="7023"/>
<dbReference type="Ensembl" id="ENST00000204517.11">
    <property type="protein sequence ID" value="ENSP00000204517.6"/>
    <property type="gene ID" value="ENSG00000090447.12"/>
</dbReference>
<dbReference type="GeneID" id="7023"/>
<dbReference type="KEGG" id="hsa:7023"/>
<dbReference type="MANE-Select" id="ENST00000204517.11">
    <property type="protein sequence ID" value="ENSP00000204517.6"/>
    <property type="RefSeq nucleotide sequence ID" value="NM_003223.3"/>
    <property type="RefSeq protein sequence ID" value="NP_003214.1"/>
</dbReference>
<dbReference type="UCSC" id="uc010uxg.3">
    <property type="organism name" value="human"/>
</dbReference>
<dbReference type="AGR" id="HGNC:11745"/>
<dbReference type="CTD" id="7023"/>
<dbReference type="DisGeNET" id="7023"/>
<dbReference type="GeneCards" id="TFAP4"/>
<dbReference type="HGNC" id="HGNC:11745">
    <property type="gene designation" value="TFAP4"/>
</dbReference>
<dbReference type="HPA" id="ENSG00000090447">
    <property type="expression patterns" value="Low tissue specificity"/>
</dbReference>
<dbReference type="MIM" id="600743">
    <property type="type" value="gene"/>
</dbReference>
<dbReference type="neXtProt" id="NX_Q01664"/>
<dbReference type="OpenTargets" id="ENSG00000090447"/>
<dbReference type="PharmGKB" id="PA36462"/>
<dbReference type="VEuPathDB" id="HostDB:ENSG00000090447"/>
<dbReference type="eggNOG" id="KOG0561">
    <property type="taxonomic scope" value="Eukaryota"/>
</dbReference>
<dbReference type="GeneTree" id="ENSGT00390000015189"/>
<dbReference type="HOGENOM" id="CLU_064747_0_0_1"/>
<dbReference type="InParanoid" id="Q01664"/>
<dbReference type="OMA" id="TQPHHVT"/>
<dbReference type="OrthoDB" id="10029128at2759"/>
<dbReference type="PAN-GO" id="Q01664">
    <property type="GO annotations" value="4 GO annotations based on evolutionary models"/>
</dbReference>
<dbReference type="PhylomeDB" id="Q01664"/>
<dbReference type="TreeFam" id="TF316489"/>
<dbReference type="PathwayCommons" id="Q01664"/>
<dbReference type="SignaLink" id="Q01664"/>
<dbReference type="SIGNOR" id="Q01664"/>
<dbReference type="BioGRID-ORCS" id="7023">
    <property type="hits" value="191 hits in 1200 CRISPR screens"/>
</dbReference>
<dbReference type="GeneWiki" id="TFAP4"/>
<dbReference type="GenomeRNAi" id="7023"/>
<dbReference type="Pharos" id="Q01664">
    <property type="development level" value="Tbio"/>
</dbReference>
<dbReference type="PRO" id="PR:Q01664"/>
<dbReference type="Proteomes" id="UP000005640">
    <property type="component" value="Chromosome 16"/>
</dbReference>
<dbReference type="RNAct" id="Q01664">
    <property type="molecule type" value="protein"/>
</dbReference>
<dbReference type="Bgee" id="ENSG00000090447">
    <property type="expression patterns" value="Expressed in olfactory bulb and 153 other cell types or tissues"/>
</dbReference>
<dbReference type="ExpressionAtlas" id="Q01664">
    <property type="expression patterns" value="baseline and differential"/>
</dbReference>
<dbReference type="GO" id="GO:0000785">
    <property type="term" value="C:chromatin"/>
    <property type="evidence" value="ECO:0000247"/>
    <property type="project" value="NTNU_SB"/>
</dbReference>
<dbReference type="GO" id="GO:0005739">
    <property type="term" value="C:mitochondrion"/>
    <property type="evidence" value="ECO:0000314"/>
    <property type="project" value="HPA"/>
</dbReference>
<dbReference type="GO" id="GO:0005654">
    <property type="term" value="C:nucleoplasm"/>
    <property type="evidence" value="ECO:0000314"/>
    <property type="project" value="HPA"/>
</dbReference>
<dbReference type="GO" id="GO:0005634">
    <property type="term" value="C:nucleus"/>
    <property type="evidence" value="ECO:0000314"/>
    <property type="project" value="UniProtKB"/>
</dbReference>
<dbReference type="GO" id="GO:0017053">
    <property type="term" value="C:transcription repressor complex"/>
    <property type="evidence" value="ECO:0000250"/>
    <property type="project" value="UniProtKB"/>
</dbReference>
<dbReference type="GO" id="GO:0003677">
    <property type="term" value="F:DNA binding"/>
    <property type="evidence" value="ECO:0000314"/>
    <property type="project" value="UniProtKB"/>
</dbReference>
<dbReference type="GO" id="GO:0001228">
    <property type="term" value="F:DNA-binding transcription activator activity, RNA polymerase II-specific"/>
    <property type="evidence" value="ECO:0000314"/>
    <property type="project" value="ARUK-UCL"/>
</dbReference>
<dbReference type="GO" id="GO:0000981">
    <property type="term" value="F:DNA-binding transcription factor activity, RNA polymerase II-specific"/>
    <property type="evidence" value="ECO:0000314"/>
    <property type="project" value="UniProtKB"/>
</dbReference>
<dbReference type="GO" id="GO:0070888">
    <property type="term" value="F:E-box binding"/>
    <property type="evidence" value="ECO:0000314"/>
    <property type="project" value="UniProtKB"/>
</dbReference>
<dbReference type="GO" id="GO:0042826">
    <property type="term" value="F:histone deacetylase binding"/>
    <property type="evidence" value="ECO:0000353"/>
    <property type="project" value="UniProtKB"/>
</dbReference>
<dbReference type="GO" id="GO:0042803">
    <property type="term" value="F:protein homodimerization activity"/>
    <property type="evidence" value="ECO:0000353"/>
    <property type="project" value="UniProtKB"/>
</dbReference>
<dbReference type="GO" id="GO:0000978">
    <property type="term" value="F:RNA polymerase II cis-regulatory region sequence-specific DNA binding"/>
    <property type="evidence" value="ECO:0000318"/>
    <property type="project" value="GO_Central"/>
</dbReference>
<dbReference type="GO" id="GO:0043565">
    <property type="term" value="F:sequence-specific DNA binding"/>
    <property type="evidence" value="ECO:0000314"/>
    <property type="project" value="UniProtKB"/>
</dbReference>
<dbReference type="GO" id="GO:1990837">
    <property type="term" value="F:sequence-specific double-stranded DNA binding"/>
    <property type="evidence" value="ECO:0000314"/>
    <property type="project" value="ARUK-UCL"/>
</dbReference>
<dbReference type="GO" id="GO:0000976">
    <property type="term" value="F:transcription cis-regulatory region binding"/>
    <property type="evidence" value="ECO:0000314"/>
    <property type="project" value="UniProtKB"/>
</dbReference>
<dbReference type="GO" id="GO:0071549">
    <property type="term" value="P:cellular response to dexamethasone stimulus"/>
    <property type="evidence" value="ECO:0007669"/>
    <property type="project" value="Ensembl"/>
</dbReference>
<dbReference type="GO" id="GO:0030330">
    <property type="term" value="P:DNA damage response, signal transduction by p53 class mediator"/>
    <property type="evidence" value="ECO:0000314"/>
    <property type="project" value="UniProtKB"/>
</dbReference>
<dbReference type="GO" id="GO:0043922">
    <property type="term" value="P:negative regulation by host of viral transcription"/>
    <property type="evidence" value="ECO:0000314"/>
    <property type="project" value="UniProtKB"/>
</dbReference>
<dbReference type="GO" id="GO:0008285">
    <property type="term" value="P:negative regulation of cell population proliferation"/>
    <property type="evidence" value="ECO:0000315"/>
    <property type="project" value="UniProtKB"/>
</dbReference>
<dbReference type="GO" id="GO:0045736">
    <property type="term" value="P:negative regulation of cyclin-dependent protein serine/threonine kinase activity"/>
    <property type="evidence" value="ECO:0000314"/>
    <property type="project" value="UniProtKB"/>
</dbReference>
<dbReference type="GO" id="GO:0043392">
    <property type="term" value="P:negative regulation of DNA binding"/>
    <property type="evidence" value="ECO:0000314"/>
    <property type="project" value="UniProtKB"/>
</dbReference>
<dbReference type="GO" id="GO:0045892">
    <property type="term" value="P:negative regulation of DNA-templated transcription"/>
    <property type="evidence" value="ECO:0000314"/>
    <property type="project" value="UniProtKB"/>
</dbReference>
<dbReference type="GO" id="GO:0010629">
    <property type="term" value="P:negative regulation of gene expression"/>
    <property type="evidence" value="ECO:0007669"/>
    <property type="project" value="Ensembl"/>
</dbReference>
<dbReference type="GO" id="GO:0043923">
    <property type="term" value="P:positive regulation by host of viral transcription"/>
    <property type="evidence" value="ECO:0000314"/>
    <property type="project" value="UniProtKB"/>
</dbReference>
<dbReference type="GO" id="GO:0043065">
    <property type="term" value="P:positive regulation of apoptotic process"/>
    <property type="evidence" value="ECO:0000314"/>
    <property type="project" value="UniProtKB"/>
</dbReference>
<dbReference type="GO" id="GO:0045893">
    <property type="term" value="P:positive regulation of DNA-templated transcription"/>
    <property type="evidence" value="ECO:0000315"/>
    <property type="project" value="UniProtKB"/>
</dbReference>
<dbReference type="GO" id="GO:0065003">
    <property type="term" value="P:protein-containing complex assembly"/>
    <property type="evidence" value="ECO:0000314"/>
    <property type="project" value="UniProtKB"/>
</dbReference>
<dbReference type="GO" id="GO:1901990">
    <property type="term" value="P:regulation of mitotic cell cycle phase transition"/>
    <property type="evidence" value="ECO:0000314"/>
    <property type="project" value="UniProtKB"/>
</dbReference>
<dbReference type="GO" id="GO:0006357">
    <property type="term" value="P:regulation of transcription by RNA polymerase II"/>
    <property type="evidence" value="ECO:0000318"/>
    <property type="project" value="GO_Central"/>
</dbReference>
<dbReference type="CDD" id="cd11419">
    <property type="entry name" value="bHLHzip_TFAP4"/>
    <property type="match status" value="1"/>
</dbReference>
<dbReference type="FunFam" id="4.10.280.10:FF:000036">
    <property type="entry name" value="Transcription factor AP-4"/>
    <property type="match status" value="1"/>
</dbReference>
<dbReference type="Gene3D" id="4.10.280.10">
    <property type="entry name" value="Helix-loop-helix DNA-binding domain"/>
    <property type="match status" value="1"/>
</dbReference>
<dbReference type="InterPro" id="IPR011598">
    <property type="entry name" value="bHLH_dom"/>
</dbReference>
<dbReference type="InterPro" id="IPR036638">
    <property type="entry name" value="HLH_DNA-bd_sf"/>
</dbReference>
<dbReference type="InterPro" id="IPR052207">
    <property type="entry name" value="Max-like/E-box_TFs"/>
</dbReference>
<dbReference type="PANTHER" id="PTHR15741">
    <property type="entry name" value="BASIC HELIX-LOOP-HELIX ZIP TRANSCRIPTION FACTOR"/>
    <property type="match status" value="1"/>
</dbReference>
<dbReference type="PANTHER" id="PTHR15741:SF27">
    <property type="entry name" value="TRANSCRIPTION FACTOR AP-4"/>
    <property type="match status" value="1"/>
</dbReference>
<dbReference type="Pfam" id="PF00010">
    <property type="entry name" value="HLH"/>
    <property type="match status" value="1"/>
</dbReference>
<dbReference type="SMART" id="SM00353">
    <property type="entry name" value="HLH"/>
    <property type="match status" value="1"/>
</dbReference>
<dbReference type="SUPFAM" id="SSF47459">
    <property type="entry name" value="HLH, helix-loop-helix DNA-binding domain"/>
    <property type="match status" value="1"/>
</dbReference>
<dbReference type="PROSITE" id="PS50888">
    <property type="entry name" value="BHLH"/>
    <property type="match status" value="1"/>
</dbReference>
<protein>
    <recommendedName>
        <fullName>Transcription factor AP-4</fullName>
    </recommendedName>
    <alternativeName>
        <fullName>Activating enhancer-binding protein 4</fullName>
    </alternativeName>
    <alternativeName>
        <fullName>Class C basic helix-loop-helix protein 41</fullName>
        <shortName>bHLHc41</shortName>
    </alternativeName>
</protein>
<comment type="function">
    <text>Transcription factor that activates both viral and cellular genes by binding to the symmetrical DNA sequence 5'-CAGCTG-3'.</text>
</comment>
<comment type="subunit">
    <text>Efficient DNA binding requires dimerization with another bHLH protein. Homodimer.</text>
</comment>
<comment type="interaction">
    <interactant intactId="EBI-2514218">
        <id>Q01664</id>
    </interactant>
    <interactant intactId="EBI-949782">
        <id>Q96IF1</id>
        <label>AJUBA</label>
    </interactant>
    <organismsDiffer>false</organismsDiffer>
    <experiments>3</experiments>
</comment>
<comment type="interaction">
    <interactant intactId="EBI-2514218">
        <id>Q01664</id>
    </interactant>
    <interactant intactId="EBI-371922">
        <id>Q96B26</id>
        <label>EXOSC8</label>
    </interactant>
    <organismsDiffer>false</organismsDiffer>
    <experiments>6</experiments>
</comment>
<comment type="interaction">
    <interactant intactId="EBI-2514218">
        <id>Q01664</id>
    </interactant>
    <interactant intactId="EBI-744104">
        <id>P55040</id>
        <label>GEM</label>
    </interactant>
    <organismsDiffer>false</organismsDiffer>
    <experiments>2</experiments>
</comment>
<comment type="interaction">
    <interactant intactId="EBI-2514218">
        <id>Q01664</id>
    </interactant>
    <interactant intactId="EBI-618309">
        <id>Q08379</id>
        <label>GOLGA2</label>
    </interactant>
    <organismsDiffer>false</organismsDiffer>
    <experiments>6</experiments>
</comment>
<comment type="interaction">
    <interactant intactId="EBI-2514218">
        <id>Q01664</id>
    </interactant>
    <interactant intactId="EBI-6509505">
        <id>Q0VD86</id>
        <label>INCA1</label>
    </interactant>
    <organismsDiffer>false</organismsDiffer>
    <experiments>3</experiments>
</comment>
<comment type="interaction">
    <interactant intactId="EBI-2514218">
        <id>Q01664</id>
    </interactant>
    <interactant intactId="EBI-2432309">
        <id>Q92876</id>
        <label>KLK6</label>
    </interactant>
    <organismsDiffer>false</organismsDiffer>
    <experiments>3</experiments>
</comment>
<comment type="interaction">
    <interactant intactId="EBI-2514218">
        <id>Q01664</id>
    </interactant>
    <interactant intactId="EBI-348259">
        <id>Q96EZ8</id>
        <label>MCRS1</label>
    </interactant>
    <organismsDiffer>false</organismsDiffer>
    <experiments>3</experiments>
</comment>
<comment type="interaction">
    <interactant intactId="EBI-2514218">
        <id>Q01664</id>
    </interactant>
    <interactant intactId="EBI-1246238">
        <id>P17568</id>
        <label>NDUFB7</label>
    </interactant>
    <organismsDiffer>false</organismsDiffer>
    <experiments>3</experiments>
</comment>
<comment type="interaction">
    <interactant intactId="EBI-2514218">
        <id>Q01664</id>
    </interactant>
    <interactant intactId="EBI-1047946">
        <id>P26045</id>
        <label>PTPN3</label>
    </interactant>
    <organismsDiffer>false</organismsDiffer>
    <experiments>3</experiments>
</comment>
<comment type="interaction">
    <interactant intactId="EBI-2514218">
        <id>Q01664</id>
    </interactant>
    <interactant intactId="EBI-12025260">
        <id>Q5VUG0</id>
        <label>SFMBT2</label>
    </interactant>
    <organismsDiffer>false</organismsDiffer>
    <experiments>3</experiments>
</comment>
<comment type="interaction">
    <interactant intactId="EBI-2514218">
        <id>Q01664</id>
    </interactant>
    <interactant intactId="EBI-750487">
        <id>Q8WW24</id>
        <label>TEKT4</label>
    </interactant>
    <organismsDiffer>false</organismsDiffer>
    <experiments>3</experiments>
</comment>
<comment type="interaction">
    <interactant intactId="EBI-2514218">
        <id>Q01664</id>
    </interactant>
    <interactant intactId="EBI-359224">
        <id>Q13077</id>
        <label>TRAF1</label>
    </interactant>
    <organismsDiffer>false</organismsDiffer>
    <experiments>6</experiments>
</comment>
<comment type="interaction">
    <interactant intactId="EBI-2514218">
        <id>Q01664</id>
    </interactant>
    <interactant intactId="EBI-3650647">
        <id>Q9BUZ4</id>
        <label>TRAF4</label>
    </interactant>
    <organismsDiffer>false</organismsDiffer>
    <experiments>3</experiments>
</comment>
<comment type="interaction">
    <interactant intactId="EBI-2514218">
        <id>Q01664</id>
    </interactant>
    <interactant intactId="EBI-2803134">
        <id>Q2NL98</id>
        <label>VMAC</label>
    </interactant>
    <organismsDiffer>false</organismsDiffer>
    <experiments>3</experiments>
</comment>
<comment type="subcellular location">
    <subcellularLocation>
        <location>Nucleus</location>
    </subcellularLocation>
</comment>
<sequence length="338" mass="38726">MEYFMVPTQKVPSLQHFRKTEKEVIGGLCSLANIPLTPETQRDQERRIRREIANSNERRRMQSINAGFQSLKTLIPHTDGEKLSKAAILQQTAEYIFSLEQEKTRLLQQNTQLKRFIQELSGSSPKRRRAEDKDEGIGSPDIWEDEKAEDLRREMIELRQQLDKERSVRMMLEEQVRSLEAHMYPEKLKVIAQQVQLQQQQEQVRLLHQEKLEREQQQLRTQLLPPPAPTHHPTVIVPAPPPPPSHHINVVTMGPSSVINSVSTSRQNLDTIVQAIQHIEGTQEKQELEEEQRRAVIVKPVRSCPEAPTSDTASDSEASDSDAMDQSREEPSGDGELP</sequence>
<name>TFAP4_HUMAN</name>
<feature type="chain" id="PRO_0000127458" description="Transcription factor AP-4">
    <location>
        <begin position="1"/>
        <end position="338"/>
    </location>
</feature>
<feature type="domain" description="bHLH" evidence="1">
    <location>
        <begin position="48"/>
        <end position="99"/>
    </location>
</feature>
<feature type="region of interest" description="Leucine-zipper 1">
    <location>
        <begin position="100"/>
        <end position="120"/>
    </location>
</feature>
<feature type="region of interest" description="Disordered" evidence="2">
    <location>
        <begin position="118"/>
        <end position="141"/>
    </location>
</feature>
<feature type="region of interest" description="Leucine-zipper 2">
    <location>
        <begin position="151"/>
        <end position="179"/>
    </location>
</feature>
<feature type="region of interest" description="Disordered" evidence="2">
    <location>
        <begin position="283"/>
        <end position="338"/>
    </location>
</feature>
<feature type="compositionally biased region" description="Basic and acidic residues" evidence="2">
    <location>
        <begin position="283"/>
        <end position="294"/>
    </location>
</feature>
<feature type="modified residue" description="Phosphoserine" evidence="7">
    <location>
        <position position="123"/>
    </location>
</feature>
<feature type="modified residue" description="Phosphoserine" evidence="5 6 7 8">
    <location>
        <position position="124"/>
    </location>
</feature>
<feature type="modified residue" description="Phosphoserine" evidence="4 6 7 8">
    <location>
        <position position="139"/>
    </location>
</feature>
<feature type="cross-link" description="Glycyl lysine isopeptide (Lys-Gly) (interchain with G-Cter in SUMO2)" evidence="9">
    <location>
        <position position="147"/>
    </location>
</feature>
<feature type="cross-link" description="Glycyl lysine isopeptide (Lys-Gly) (interchain with G-Cter in SUMO2)" evidence="9">
    <location>
        <position position="187"/>
    </location>
</feature>
<feature type="cross-link" description="Glycyl lysine isopeptide (Lys-Gly) (interchain with G-Cter in SUMO2)" evidence="9">
    <location>
        <position position="189"/>
    </location>
</feature>
<feature type="cross-link" description="Glycyl lysine isopeptide (Lys-Gly) (interchain with G-Cter in SUMO2)" evidence="9">
    <location>
        <position position="285"/>
    </location>
</feature>
<feature type="sequence variant" id="VAR_059346" description="In dbSNP:rs251732." evidence="3">
    <original>Q</original>
    <variation>H</variation>
    <location>
        <position position="218"/>
    </location>
</feature>
<proteinExistence type="evidence at protein level"/>
<organism>
    <name type="scientific">Homo sapiens</name>
    <name type="common">Human</name>
    <dbReference type="NCBI Taxonomy" id="9606"/>
    <lineage>
        <taxon>Eukaryota</taxon>
        <taxon>Metazoa</taxon>
        <taxon>Chordata</taxon>
        <taxon>Craniata</taxon>
        <taxon>Vertebrata</taxon>
        <taxon>Euteleostomi</taxon>
        <taxon>Mammalia</taxon>
        <taxon>Eutheria</taxon>
        <taxon>Euarchontoglires</taxon>
        <taxon>Primates</taxon>
        <taxon>Haplorrhini</taxon>
        <taxon>Catarrhini</taxon>
        <taxon>Hominidae</taxon>
        <taxon>Homo</taxon>
    </lineage>
</organism>
<reference key="1">
    <citation type="journal article" date="1994" name="J. Virol.">
        <title>Role of flanking E box motifs in human immunodeficiency virus type 1 TATA element function.</title>
        <authorList>
            <person name="Ou S.H."/>
            <person name="Garcia-Martinez L.F."/>
            <person name="Paulssen E.J."/>
            <person name="Gaynor R.B."/>
        </authorList>
    </citation>
    <scope>NUCLEOTIDE SEQUENCE [MRNA]</scope>
</reference>
<reference key="2">
    <citation type="journal article" date="2004" name="Nature">
        <title>The sequence and analysis of duplication-rich human chromosome 16.</title>
        <authorList>
            <person name="Martin J."/>
            <person name="Han C."/>
            <person name="Gordon L.A."/>
            <person name="Terry A."/>
            <person name="Prabhakar S."/>
            <person name="She X."/>
            <person name="Xie G."/>
            <person name="Hellsten U."/>
            <person name="Chan Y.M."/>
            <person name="Altherr M."/>
            <person name="Couronne O."/>
            <person name="Aerts A."/>
            <person name="Bajorek E."/>
            <person name="Black S."/>
            <person name="Blumer H."/>
            <person name="Branscomb E."/>
            <person name="Brown N.C."/>
            <person name="Bruno W.J."/>
            <person name="Buckingham J.M."/>
            <person name="Callen D.F."/>
            <person name="Campbell C.S."/>
            <person name="Campbell M.L."/>
            <person name="Campbell E.W."/>
            <person name="Caoile C."/>
            <person name="Challacombe J.F."/>
            <person name="Chasteen L.A."/>
            <person name="Chertkov O."/>
            <person name="Chi H.C."/>
            <person name="Christensen M."/>
            <person name="Clark L.M."/>
            <person name="Cohn J.D."/>
            <person name="Denys M."/>
            <person name="Detter J.C."/>
            <person name="Dickson M."/>
            <person name="Dimitrijevic-Bussod M."/>
            <person name="Escobar J."/>
            <person name="Fawcett J.J."/>
            <person name="Flowers D."/>
            <person name="Fotopulos D."/>
            <person name="Glavina T."/>
            <person name="Gomez M."/>
            <person name="Gonzales E."/>
            <person name="Goodstein D."/>
            <person name="Goodwin L.A."/>
            <person name="Grady D.L."/>
            <person name="Grigoriev I."/>
            <person name="Groza M."/>
            <person name="Hammon N."/>
            <person name="Hawkins T."/>
            <person name="Haydu L."/>
            <person name="Hildebrand C.E."/>
            <person name="Huang W."/>
            <person name="Israni S."/>
            <person name="Jett J."/>
            <person name="Jewett P.B."/>
            <person name="Kadner K."/>
            <person name="Kimball H."/>
            <person name="Kobayashi A."/>
            <person name="Krawczyk M.-C."/>
            <person name="Leyba T."/>
            <person name="Longmire J.L."/>
            <person name="Lopez F."/>
            <person name="Lou Y."/>
            <person name="Lowry S."/>
            <person name="Ludeman T."/>
            <person name="Manohar C.F."/>
            <person name="Mark G.A."/>
            <person name="McMurray K.L."/>
            <person name="Meincke L.J."/>
            <person name="Morgan J."/>
            <person name="Moyzis R.K."/>
            <person name="Mundt M.O."/>
            <person name="Munk A.C."/>
            <person name="Nandkeshwar R.D."/>
            <person name="Pitluck S."/>
            <person name="Pollard M."/>
            <person name="Predki P."/>
            <person name="Parson-Quintana B."/>
            <person name="Ramirez L."/>
            <person name="Rash S."/>
            <person name="Retterer J."/>
            <person name="Ricke D.O."/>
            <person name="Robinson D.L."/>
            <person name="Rodriguez A."/>
            <person name="Salamov A."/>
            <person name="Saunders E.H."/>
            <person name="Scott D."/>
            <person name="Shough T."/>
            <person name="Stallings R.L."/>
            <person name="Stalvey M."/>
            <person name="Sutherland R.D."/>
            <person name="Tapia R."/>
            <person name="Tesmer J.G."/>
            <person name="Thayer N."/>
            <person name="Thompson L.S."/>
            <person name="Tice H."/>
            <person name="Torney D.C."/>
            <person name="Tran-Gyamfi M."/>
            <person name="Tsai M."/>
            <person name="Ulanovsky L.E."/>
            <person name="Ustaszewska A."/>
            <person name="Vo N."/>
            <person name="White P.S."/>
            <person name="Williams A.L."/>
            <person name="Wills P.L."/>
            <person name="Wu J.-R."/>
            <person name="Wu K."/>
            <person name="Yang J."/>
            <person name="DeJong P."/>
            <person name="Bruce D."/>
            <person name="Doggett N.A."/>
            <person name="Deaven L."/>
            <person name="Schmutz J."/>
            <person name="Grimwood J."/>
            <person name="Richardson P."/>
            <person name="Rokhsar D.S."/>
            <person name="Eichler E.E."/>
            <person name="Gilna P."/>
            <person name="Lucas S.M."/>
            <person name="Myers R.M."/>
            <person name="Rubin E.M."/>
            <person name="Pennacchio L.A."/>
        </authorList>
    </citation>
    <scope>NUCLEOTIDE SEQUENCE [LARGE SCALE GENOMIC DNA]</scope>
    <scope>VARIANT HIS-218</scope>
</reference>
<reference key="3">
    <citation type="journal article" date="2004" name="Genome Res.">
        <title>The status, quality, and expansion of the NIH full-length cDNA project: the Mammalian Gene Collection (MGC).</title>
        <authorList>
            <consortium name="The MGC Project Team"/>
        </authorList>
    </citation>
    <scope>NUCLEOTIDE SEQUENCE [LARGE SCALE MRNA]</scope>
    <source>
        <tissue>Brain</tissue>
    </source>
</reference>
<reference key="4">
    <citation type="journal article" date="1990" name="Genes Dev.">
        <title>Transcription factor AP-4 contains multiple dimerization domains that regulate dimer specificity.</title>
        <authorList>
            <person name="Hu Y.-F."/>
            <person name="Luescher B."/>
            <person name="Admon A."/>
            <person name="Mermod N."/>
            <person name="Tjian R."/>
        </authorList>
    </citation>
    <scope>NUCLEOTIDE SEQUENCE [MRNA] OF 18-338</scope>
    <scope>PARTIAL PROTEIN SEQUENCE</scope>
</reference>
<reference key="5">
    <citation type="journal article" date="2006" name="Cell">
        <title>Global, in vivo, and site-specific phosphorylation dynamics in signaling networks.</title>
        <authorList>
            <person name="Olsen J.V."/>
            <person name="Blagoev B."/>
            <person name="Gnad F."/>
            <person name="Macek B."/>
            <person name="Kumar C."/>
            <person name="Mortensen P."/>
            <person name="Mann M."/>
        </authorList>
    </citation>
    <scope>PHOSPHORYLATION [LARGE SCALE ANALYSIS] AT SER-139</scope>
    <scope>IDENTIFICATION BY MASS SPECTROMETRY [LARGE SCALE ANALYSIS]</scope>
    <source>
        <tissue>Cervix carcinoma</tissue>
    </source>
</reference>
<reference key="6">
    <citation type="journal article" date="2008" name="Proc. Natl. Acad. Sci. U.S.A.">
        <title>A quantitative atlas of mitotic phosphorylation.</title>
        <authorList>
            <person name="Dephoure N."/>
            <person name="Zhou C."/>
            <person name="Villen J."/>
            <person name="Beausoleil S.A."/>
            <person name="Bakalarski C.E."/>
            <person name="Elledge S.J."/>
            <person name="Gygi S.P."/>
        </authorList>
    </citation>
    <scope>PHOSPHORYLATION [LARGE SCALE ANALYSIS] AT SER-124</scope>
    <scope>IDENTIFICATION BY MASS SPECTROMETRY [LARGE SCALE ANALYSIS]</scope>
    <source>
        <tissue>Cervix carcinoma</tissue>
    </source>
</reference>
<reference key="7">
    <citation type="journal article" date="2009" name="Mol. Cell. Proteomics">
        <title>Large-scale proteomics analysis of the human kinome.</title>
        <authorList>
            <person name="Oppermann F.S."/>
            <person name="Gnad F."/>
            <person name="Olsen J.V."/>
            <person name="Hornberger R."/>
            <person name="Greff Z."/>
            <person name="Keri G."/>
            <person name="Mann M."/>
            <person name="Daub H."/>
        </authorList>
    </citation>
    <scope>IDENTIFICATION BY MASS SPECTROMETRY [LARGE SCALE ANALYSIS]</scope>
</reference>
<reference key="8">
    <citation type="journal article" date="2010" name="Sci. Signal.">
        <title>Quantitative phosphoproteomics reveals widespread full phosphorylation site occupancy during mitosis.</title>
        <authorList>
            <person name="Olsen J.V."/>
            <person name="Vermeulen M."/>
            <person name="Santamaria A."/>
            <person name="Kumar C."/>
            <person name="Miller M.L."/>
            <person name="Jensen L.J."/>
            <person name="Gnad F."/>
            <person name="Cox J."/>
            <person name="Jensen T.S."/>
            <person name="Nigg E.A."/>
            <person name="Brunak S."/>
            <person name="Mann M."/>
        </authorList>
    </citation>
    <scope>PHOSPHORYLATION [LARGE SCALE ANALYSIS] AT SER-124 AND SER-139</scope>
    <scope>IDENTIFICATION BY MASS SPECTROMETRY [LARGE SCALE ANALYSIS]</scope>
    <source>
        <tissue>Cervix carcinoma</tissue>
    </source>
</reference>
<reference key="9">
    <citation type="journal article" date="2011" name="Sci. Signal.">
        <title>System-wide temporal characterization of the proteome and phosphoproteome of human embryonic stem cell differentiation.</title>
        <authorList>
            <person name="Rigbolt K.T."/>
            <person name="Prokhorova T.A."/>
            <person name="Akimov V."/>
            <person name="Henningsen J."/>
            <person name="Johansen P.T."/>
            <person name="Kratchmarova I."/>
            <person name="Kassem M."/>
            <person name="Mann M."/>
            <person name="Olsen J.V."/>
            <person name="Blagoev B."/>
        </authorList>
    </citation>
    <scope>PHOSPHORYLATION [LARGE SCALE ANALYSIS] AT SER-123; SER-124 AND SER-139</scope>
    <scope>IDENTIFICATION BY MASS SPECTROMETRY [LARGE SCALE ANALYSIS]</scope>
</reference>
<reference key="10">
    <citation type="journal article" date="2013" name="J. Proteome Res.">
        <title>Toward a comprehensive characterization of a human cancer cell phosphoproteome.</title>
        <authorList>
            <person name="Zhou H."/>
            <person name="Di Palma S."/>
            <person name="Preisinger C."/>
            <person name="Peng M."/>
            <person name="Polat A.N."/>
            <person name="Heck A.J."/>
            <person name="Mohammed S."/>
        </authorList>
    </citation>
    <scope>PHOSPHORYLATION [LARGE SCALE ANALYSIS] AT SER-124 AND SER-139</scope>
    <scope>IDENTIFICATION BY MASS SPECTROMETRY [LARGE SCALE ANALYSIS]</scope>
    <source>
        <tissue>Cervix carcinoma</tissue>
        <tissue>Erythroleukemia</tissue>
    </source>
</reference>
<reference key="11">
    <citation type="journal article" date="2017" name="Nat. Struct. Mol. Biol.">
        <title>Site-specific mapping of the human SUMO proteome reveals co-modification with phosphorylation.</title>
        <authorList>
            <person name="Hendriks I.A."/>
            <person name="Lyon D."/>
            <person name="Young C."/>
            <person name="Jensen L.J."/>
            <person name="Vertegaal A.C."/>
            <person name="Nielsen M.L."/>
        </authorList>
    </citation>
    <scope>SUMOYLATION [LARGE SCALE ANALYSIS] AT LYS-147; LYS-187; LYS-189 AND LYS-285</scope>
    <scope>IDENTIFICATION BY MASS SPECTROMETRY [LARGE SCALE ANALYSIS]</scope>
</reference>
<gene>
    <name type="primary">TFAP4</name>
    <name type="synonym">BHLHC41</name>
</gene>
<evidence type="ECO:0000255" key="1">
    <source>
        <dbReference type="PROSITE-ProRule" id="PRU00981"/>
    </source>
</evidence>
<evidence type="ECO:0000256" key="2">
    <source>
        <dbReference type="SAM" id="MobiDB-lite"/>
    </source>
</evidence>
<evidence type="ECO:0000269" key="3">
    <source>
    </source>
</evidence>
<evidence type="ECO:0007744" key="4">
    <source>
    </source>
</evidence>
<evidence type="ECO:0007744" key="5">
    <source>
    </source>
</evidence>
<evidence type="ECO:0007744" key="6">
    <source>
    </source>
</evidence>
<evidence type="ECO:0007744" key="7">
    <source>
    </source>
</evidence>
<evidence type="ECO:0007744" key="8">
    <source>
    </source>
</evidence>
<evidence type="ECO:0007744" key="9">
    <source>
    </source>
</evidence>
<keyword id="KW-0010">Activator</keyword>
<keyword id="KW-0903">Direct protein sequencing</keyword>
<keyword id="KW-0238">DNA-binding</keyword>
<keyword id="KW-1017">Isopeptide bond</keyword>
<keyword id="KW-0539">Nucleus</keyword>
<keyword id="KW-0597">Phosphoprotein</keyword>
<keyword id="KW-1267">Proteomics identification</keyword>
<keyword id="KW-1185">Reference proteome</keyword>
<keyword id="KW-0677">Repeat</keyword>
<keyword id="KW-0804">Transcription</keyword>
<keyword id="KW-0805">Transcription regulation</keyword>
<keyword id="KW-0832">Ubl conjugation</keyword>